<dbReference type="EMBL" id="U92084">
    <property type="protein sequence ID" value="AAB96887.1"/>
    <property type="molecule type" value="mRNA"/>
</dbReference>
<dbReference type="EMBL" id="U92085">
    <property type="protein sequence ID" value="AAB96888.1"/>
    <property type="molecule type" value="Genomic_DNA"/>
</dbReference>
<dbReference type="EMBL" id="CP002685">
    <property type="protein sequence ID" value="AEC06619.1"/>
    <property type="molecule type" value="Genomic_DNA"/>
</dbReference>
<dbReference type="EMBL" id="AY085130">
    <property type="protein sequence ID" value="AAM61683.1"/>
    <property type="molecule type" value="mRNA"/>
</dbReference>
<dbReference type="EMBL" id="BT025619">
    <property type="protein sequence ID" value="ABF59037.1"/>
    <property type="molecule type" value="mRNA"/>
</dbReference>
<dbReference type="PIR" id="E84551">
    <property type="entry name" value="E84551"/>
</dbReference>
<dbReference type="SMR" id="Q8LEZ8"/>
<dbReference type="BioGRID" id="1602">
    <property type="interactions" value="9"/>
</dbReference>
<dbReference type="FunCoup" id="Q8LEZ8">
    <property type="interactions" value="3079"/>
</dbReference>
<dbReference type="STRING" id="3702.Q8LEZ8"/>
<dbReference type="PaxDb" id="3702-AT2G17380.1"/>
<dbReference type="ProteomicsDB" id="245028"/>
<dbReference type="EnsemblPlants" id="AT2G17380.1">
    <property type="protein sequence ID" value="AT2G17380.1"/>
    <property type="gene ID" value="AT2G17380"/>
</dbReference>
<dbReference type="GeneID" id="816245"/>
<dbReference type="Gramene" id="AT2G17380.1">
    <property type="protein sequence ID" value="AT2G17380.1"/>
    <property type="gene ID" value="AT2G17380"/>
</dbReference>
<dbReference type="KEGG" id="ath:AT2G17380"/>
<dbReference type="Araport" id="AT2G17380"/>
<dbReference type="TAIR" id="AT2G17380">
    <property type="gene designation" value="AP19"/>
</dbReference>
<dbReference type="eggNOG" id="KOG0934">
    <property type="taxonomic scope" value="Eukaryota"/>
</dbReference>
<dbReference type="HOGENOM" id="CLU_061221_1_3_1"/>
<dbReference type="InParanoid" id="Q8LEZ8"/>
<dbReference type="OMA" id="WYVATSE"/>
<dbReference type="PhylomeDB" id="Q8LEZ8"/>
<dbReference type="PRO" id="PR:Q8LEZ8"/>
<dbReference type="Proteomes" id="UP000006548">
    <property type="component" value="Chromosome 2"/>
</dbReference>
<dbReference type="ExpressionAtlas" id="Q8LEZ8">
    <property type="expression patterns" value="baseline and differential"/>
</dbReference>
<dbReference type="GO" id="GO:0030121">
    <property type="term" value="C:AP-1 adaptor complex"/>
    <property type="evidence" value="ECO:0007669"/>
    <property type="project" value="InterPro"/>
</dbReference>
<dbReference type="GO" id="GO:0035615">
    <property type="term" value="F:clathrin adaptor activity"/>
    <property type="evidence" value="ECO:0007669"/>
    <property type="project" value="InterPro"/>
</dbReference>
<dbReference type="GO" id="GO:0006886">
    <property type="term" value="P:intracellular protein transport"/>
    <property type="evidence" value="ECO:0007669"/>
    <property type="project" value="InterPro"/>
</dbReference>
<dbReference type="CDD" id="cd14831">
    <property type="entry name" value="AP1_sigma"/>
    <property type="match status" value="1"/>
</dbReference>
<dbReference type="FunFam" id="3.30.450.60:FF:000007">
    <property type="entry name" value="AP complex subunit sigma"/>
    <property type="match status" value="1"/>
</dbReference>
<dbReference type="Gene3D" id="3.30.450.60">
    <property type="match status" value="1"/>
</dbReference>
<dbReference type="InterPro" id="IPR044733">
    <property type="entry name" value="AP1_sigma"/>
</dbReference>
<dbReference type="InterPro" id="IPR016635">
    <property type="entry name" value="AP_complex_ssu"/>
</dbReference>
<dbReference type="InterPro" id="IPR022775">
    <property type="entry name" value="AP_mu_sigma_su"/>
</dbReference>
<dbReference type="InterPro" id="IPR000804">
    <property type="entry name" value="Clathrin_sm-chain_CS"/>
</dbReference>
<dbReference type="InterPro" id="IPR011012">
    <property type="entry name" value="Longin-like_dom_sf"/>
</dbReference>
<dbReference type="PANTHER" id="PTHR11753">
    <property type="entry name" value="ADAPTOR COMPLEXES SMALL SUBUNIT FAMILY"/>
    <property type="match status" value="1"/>
</dbReference>
<dbReference type="Pfam" id="PF01217">
    <property type="entry name" value="Clat_adaptor_s"/>
    <property type="match status" value="1"/>
</dbReference>
<dbReference type="PIRSF" id="PIRSF015588">
    <property type="entry name" value="AP_complex_sigma"/>
    <property type="match status" value="1"/>
</dbReference>
<dbReference type="SUPFAM" id="SSF64356">
    <property type="entry name" value="SNARE-like"/>
    <property type="match status" value="1"/>
</dbReference>
<dbReference type="PROSITE" id="PS00989">
    <property type="entry name" value="CLAT_ADAPTOR_S"/>
    <property type="match status" value="1"/>
</dbReference>
<gene>
    <name type="primary">AAP19-1</name>
    <name type="ordered locus">At2g17380</name>
    <name type="ORF">F5J6.14</name>
</gene>
<keyword id="KW-0968">Cytoplasmic vesicle</keyword>
<keyword id="KW-0333">Golgi apparatus</keyword>
<keyword id="KW-0472">Membrane</keyword>
<keyword id="KW-0653">Protein transport</keyword>
<keyword id="KW-1185">Reference proteome</keyword>
<keyword id="KW-0813">Transport</keyword>
<feature type="chain" id="PRO_0000397856" description="AP-1 complex subunit sigma-1">
    <location>
        <begin position="1"/>
        <end position="161"/>
    </location>
</feature>
<feature type="sequence conflict" description="In Ref. 1; AAB96887/AAB96888." evidence="3" ref="1">
    <original>E</original>
    <variation>A</variation>
    <location>
        <position position="77"/>
    </location>
</feature>
<organism>
    <name type="scientific">Arabidopsis thaliana</name>
    <name type="common">Mouse-ear cress</name>
    <dbReference type="NCBI Taxonomy" id="3702"/>
    <lineage>
        <taxon>Eukaryota</taxon>
        <taxon>Viridiplantae</taxon>
        <taxon>Streptophyta</taxon>
        <taxon>Embryophyta</taxon>
        <taxon>Tracheophyta</taxon>
        <taxon>Spermatophyta</taxon>
        <taxon>Magnoliopsida</taxon>
        <taxon>eudicotyledons</taxon>
        <taxon>Gunneridae</taxon>
        <taxon>Pentapetalae</taxon>
        <taxon>rosids</taxon>
        <taxon>malvids</taxon>
        <taxon>Brassicales</taxon>
        <taxon>Brassicaceae</taxon>
        <taxon>Camelineae</taxon>
        <taxon>Arabidopsis</taxon>
    </lineage>
</organism>
<sequence length="161" mass="18759">MIHFVLLVSRQGKVRLTKWYSPYTQKERSKVIRELSGVILNRGPKLCNFIEWRGYKVVYKRYASLYFCMCIDEADNELEVLEIIHHYVEILDRYFGSVCELDLIFNFHKAYYILDELLIAGELQESSKKTVARIISAQDQLVEVAKEEASSISNIIAQATK</sequence>
<name>AP1S1_ARATH</name>
<evidence type="ECO:0000250" key="1"/>
<evidence type="ECO:0000269" key="2">
    <source>
    </source>
</evidence>
<evidence type="ECO:0000305" key="3"/>
<protein>
    <recommendedName>
        <fullName>AP-1 complex subunit sigma-1</fullName>
    </recommendedName>
    <alternativeName>
        <fullName>Adaptor AP-1 19 kDa protein</fullName>
    </alternativeName>
    <alternativeName>
        <fullName>Adaptor protein complex AP-1 sigma-1 subunit</fullName>
    </alternativeName>
    <alternativeName>
        <fullName>Adaptor-related protein complex 1 sigma-1 subunit</fullName>
    </alternativeName>
    <alternativeName>
        <fullName>Clathrin assembly protein complex 1 sigma-1 small chain</fullName>
    </alternativeName>
    <alternativeName>
        <fullName>Clathrin assembly small subunit protein AP19-1</fullName>
        <shortName>AtAP19-1</shortName>
    </alternativeName>
    <alternativeName>
        <fullName>Sigma 1 subunit of AP-1 clathrin</fullName>
    </alternativeName>
    <alternativeName>
        <fullName>Sigma-adaptin 1</fullName>
    </alternativeName>
    <alternativeName>
        <fullName>Sigma1-adaptin</fullName>
    </alternativeName>
</protein>
<accession>Q8LEZ8</accession>
<accession>O24611</accession>
<reference key="1">
    <citation type="journal article" date="1997" name="Plant Mol. Biol.">
        <title>Molecular characterization of the AP19 gene family in Arabidopsis thaliana: components of the Golgi AP-1 clathrin assembly protein complex.</title>
        <authorList>
            <person name="Maldonado-Mendoza I.E."/>
            <person name="Nessler C.L."/>
        </authorList>
    </citation>
    <scope>NUCLEOTIDE SEQUENCE [GENOMIC DNA / MRNA]</scope>
    <scope>TISSUE SPECIFICITY</scope>
    <source>
        <strain>cv. Landsberg erecta</strain>
        <tissue>Leaf</tissue>
    </source>
</reference>
<reference key="2">
    <citation type="journal article" date="1999" name="Nature">
        <title>Sequence and analysis of chromosome 2 of the plant Arabidopsis thaliana.</title>
        <authorList>
            <person name="Lin X."/>
            <person name="Kaul S."/>
            <person name="Rounsley S.D."/>
            <person name="Shea T.P."/>
            <person name="Benito M.-I."/>
            <person name="Town C.D."/>
            <person name="Fujii C.Y."/>
            <person name="Mason T.M."/>
            <person name="Bowman C.L."/>
            <person name="Barnstead M.E."/>
            <person name="Feldblyum T.V."/>
            <person name="Buell C.R."/>
            <person name="Ketchum K.A."/>
            <person name="Lee J.J."/>
            <person name="Ronning C.M."/>
            <person name="Koo H.L."/>
            <person name="Moffat K.S."/>
            <person name="Cronin L.A."/>
            <person name="Shen M."/>
            <person name="Pai G."/>
            <person name="Van Aken S."/>
            <person name="Umayam L."/>
            <person name="Tallon L.J."/>
            <person name="Gill J.E."/>
            <person name="Adams M.D."/>
            <person name="Carrera A.J."/>
            <person name="Creasy T.H."/>
            <person name="Goodman H.M."/>
            <person name="Somerville C.R."/>
            <person name="Copenhaver G.P."/>
            <person name="Preuss D."/>
            <person name="Nierman W.C."/>
            <person name="White O."/>
            <person name="Eisen J.A."/>
            <person name="Salzberg S.L."/>
            <person name="Fraser C.M."/>
            <person name="Venter J.C."/>
        </authorList>
    </citation>
    <scope>NUCLEOTIDE SEQUENCE [LARGE SCALE GENOMIC DNA]</scope>
    <source>
        <strain>cv. Columbia</strain>
    </source>
</reference>
<reference key="3">
    <citation type="journal article" date="2017" name="Plant J.">
        <title>Araport11: a complete reannotation of the Arabidopsis thaliana reference genome.</title>
        <authorList>
            <person name="Cheng C.Y."/>
            <person name="Krishnakumar V."/>
            <person name="Chan A.P."/>
            <person name="Thibaud-Nissen F."/>
            <person name="Schobel S."/>
            <person name="Town C.D."/>
        </authorList>
    </citation>
    <scope>GENOME REANNOTATION</scope>
    <source>
        <strain>cv. Columbia</strain>
    </source>
</reference>
<reference key="4">
    <citation type="submission" date="2002-03" db="EMBL/GenBank/DDBJ databases">
        <title>Full-length cDNA from Arabidopsis thaliana.</title>
        <authorList>
            <person name="Brover V.V."/>
            <person name="Troukhan M.E."/>
            <person name="Alexandrov N.A."/>
            <person name="Lu Y.-P."/>
            <person name="Flavell R.B."/>
            <person name="Feldmann K.A."/>
        </authorList>
    </citation>
    <scope>NUCLEOTIDE SEQUENCE [LARGE SCALE MRNA]</scope>
    <source>
        <strain>cv. Columbia</strain>
    </source>
</reference>
<reference key="5">
    <citation type="submission" date="2006-05" db="EMBL/GenBank/DDBJ databases">
        <title>Arabidopsis ORF clones.</title>
        <authorList>
            <person name="Quinitio C."/>
            <person name="Chen H."/>
            <person name="Kim C.J."/>
            <person name="Shinn P."/>
            <person name="Ecker J.R."/>
        </authorList>
    </citation>
    <scope>NUCLEOTIDE SEQUENCE [LARGE SCALE MRNA]</scope>
    <source>
        <strain>cv. Columbia</strain>
    </source>
</reference>
<reference key="6">
    <citation type="journal article" date="2001" name="Mol. Biol. Cell">
        <title>Adaptins: the final recount.</title>
        <authorList>
            <person name="Boehm M."/>
            <person name="Bonifacino J.S."/>
        </authorList>
    </citation>
    <scope>GENE FAMILY</scope>
    <scope>REVIEW</scope>
</reference>
<reference key="7">
    <citation type="journal article" date="2013" name="Plant Cell Physiol.">
        <title>The AP-1 mu adaptin is required for KNOLLE localization at the cell plate to mediate cytokinesis in Arabidopsis.</title>
        <authorList>
            <person name="Teh O.K."/>
            <person name="Shimono Y."/>
            <person name="Shirakawa M."/>
            <person name="Fukao Y."/>
            <person name="Tamura K."/>
            <person name="Shimada T."/>
            <person name="Hara-Nishimura I."/>
        </authorList>
    </citation>
    <scope>IDENTIFICATION BY MASS SPECTROMETRY</scope>
    <scope>COMPONENT OF THE AP-1 COMPLEX</scope>
</reference>
<proteinExistence type="evidence at protein level"/>
<comment type="function">
    <text evidence="1">Subunit of clathrin-associated adaptor protein complex 1 that plays a role in protein sorting at the trans-Golgi network and early endosomes (TGN/EE). The AP complexes mediate the recruitment of clathrin to membranes and the recognition of sorting signals within the cytosolic tails of transmembrane cargo molecules (By similarity).</text>
</comment>
<comment type="subunit">
    <text>Adaptor protein complex 1 (AP-1) is a heterotetramer composed of two large adaptins (gamma-type subunit and beta-type subunit), a medium adaptin (mu-type subunit) and a small adaptin (sigma-type subunit).</text>
</comment>
<comment type="subcellular location">
    <subcellularLocation>
        <location evidence="1">Golgi apparatus</location>
    </subcellularLocation>
    <subcellularLocation>
        <location evidence="1">Cytoplasmic vesicle</location>
        <location evidence="1">Clathrin-coated vesicle membrane</location>
        <topology evidence="1">Peripheral membrane protein</topology>
        <orientation evidence="1">Cytoplasmic side</orientation>
    </subcellularLocation>
</comment>
<comment type="tissue specificity">
    <text evidence="2">Expressed in seedlings, roots, stems, leaves, flowers and siliques (developing fruits and seeds).</text>
</comment>
<comment type="similarity">
    <text evidence="3">Belongs to the adaptor complexes small subunit family.</text>
</comment>